<protein>
    <recommendedName>
        <fullName>Secreted effector protein EspF(U)</fullName>
    </recommendedName>
    <alternativeName>
        <fullName>EspF-like protein encoded on prophage U</fullName>
    </alternativeName>
    <alternativeName>
        <fullName>Tir-cytoskeleton coupling protein TccP</fullName>
    </alternativeName>
</protein>
<comment type="function">
    <text evidence="1">Required for efficient pedestal formation in host epithelial cells during infection. Acts as an intermediate between Tir (via host BAIAP2) and host WASL/N-WASP. Directly binds and activates WASL/N-WASP, which stimulates actin polymerization and leads to the formation of actin pedestals at the sites of bacterial adhesion (By similarity).</text>
</comment>
<comment type="subunit">
    <text evidence="1">Interacts with host BAIAP2 and host WASL/N-WASP. Can also interact with host proteins BAIAP2L1 and WAS/WASP (By similarity).</text>
</comment>
<comment type="interaction">
    <interactant intactId="EBI-10039462">
        <id>P0DJ88</id>
    </interactant>
    <interactant intactId="EBI-2483278">
        <id>Q9UHR4</id>
        <label>BAIAP2L1</label>
    </interactant>
    <organismsDiffer>true</organismsDiffer>
    <experiments>9</experiments>
</comment>
<comment type="interaction">
    <interactant intactId="EBI-10039462">
        <id>P0DJ88</id>
    </interactant>
    <interactant intactId="EBI-346375">
        <id>P42768</id>
        <label>WAS</label>
    </interactant>
    <organismsDiffer>true</organismsDiffer>
    <experiments>3</experiments>
</comment>
<comment type="interaction">
    <interactant intactId="EBI-10039462">
        <id>P0DJ88</id>
    </interactant>
    <interactant intactId="EBI-957615">
        <id>O00401</id>
        <label>WASL</label>
    </interactant>
    <organismsDiffer>true</organismsDiffer>
    <experiments>2</experiments>
</comment>
<comment type="interaction">
    <interactant intactId="EBI-10039462">
        <id>P0DJ88</id>
    </interactant>
    <interactant intactId="EBI-6142604">
        <id>O08816</id>
        <label>Wasl</label>
    </interactant>
    <organismsDiffer>true</organismsDiffer>
    <experiments>4</experiments>
</comment>
<comment type="subcellular location">
    <subcellularLocation>
        <location evidence="1">Secreted</location>
    </subcellularLocation>
    <subcellularLocation>
        <location evidence="1">Host cytoplasm</location>
    </subcellularLocation>
    <text evidence="1">Secreted via the type III secretion system (T3SS). In host cells, localizes to the tip of the actin pedestal (By similarity).</text>
</comment>
<comment type="domain">
    <text evidence="1">The N-terminal 21 amino acids are necessary and sufficient for translocation into the host cell. The C-terminal region, composed of several highly conserved proline-rich repeats, interacts with the SH3 domain of BAIAP2 and BAIAP2L1, and the GTPase binding domain (GBD) of WASL/N-WASP and WAS/WASP. The N-terminal translocation signal and two proline-rich repeats are sufficient for triggering actin polymerization, but each additional repeat gives higher activity (By similarity).</text>
</comment>
<comment type="similarity">
    <text evidence="3">Belongs to the EspF(U)/TccP family.</text>
</comment>
<keyword id="KW-1035">Host cytoplasm</keyword>
<keyword id="KW-1185">Reference proteome</keyword>
<keyword id="KW-0677">Repeat</keyword>
<keyword id="KW-0964">Secreted</keyword>
<keyword id="KW-0843">Virulence</keyword>
<evidence type="ECO:0000250" key="1"/>
<evidence type="ECO:0000256" key="2">
    <source>
        <dbReference type="SAM" id="MobiDB-lite"/>
    </source>
</evidence>
<evidence type="ECO:0000305" key="3"/>
<feature type="chain" id="PRO_0000413984" description="Secreted effector protein EspF(U)">
    <location>
        <begin position="1"/>
        <end position="337"/>
    </location>
</feature>
<feature type="repeat" description="1">
    <location>
        <begin position="96"/>
        <end position="142"/>
    </location>
</feature>
<feature type="repeat" description="2">
    <location>
        <begin position="143"/>
        <end position="189"/>
    </location>
</feature>
<feature type="repeat" description="3">
    <location>
        <begin position="190"/>
        <end position="236"/>
    </location>
</feature>
<feature type="repeat" description="4">
    <location>
        <begin position="237"/>
        <end position="283"/>
    </location>
</feature>
<feature type="repeat" description="5">
    <location>
        <begin position="284"/>
        <end position="330"/>
    </location>
</feature>
<feature type="region of interest" description="5 X 48 AA approximate tandem repeats">
    <location>
        <begin position="96"/>
        <end position="330"/>
    </location>
</feature>
<feature type="region of interest" description="Disordered" evidence="2">
    <location>
        <begin position="291"/>
        <end position="312"/>
    </location>
</feature>
<feature type="compositionally biased region" description="Pro residues" evidence="2">
    <location>
        <begin position="295"/>
        <end position="306"/>
    </location>
</feature>
<gene>
    <name type="primary">espF(U)</name>
    <name type="synonym">tccP</name>
    <name type="ordered locus">ECs2715</name>
</gene>
<dbReference type="EMBL" id="BA000007">
    <property type="protein sequence ID" value="BAB36138.1"/>
    <property type="molecule type" value="Genomic_DNA"/>
</dbReference>
<dbReference type="PIR" id="C90968">
    <property type="entry name" value="C90968"/>
</dbReference>
<dbReference type="RefSeq" id="WP_010917831.1">
    <property type="nucleotide sequence ID" value="NZ_SWKA01000005.1"/>
</dbReference>
<dbReference type="SMR" id="P0DJ88"/>
<dbReference type="IntAct" id="P0DJ88">
    <property type="interactions" value="5"/>
</dbReference>
<dbReference type="STRING" id="155864.Z3072"/>
<dbReference type="KEGG" id="ecs:ECs_2715"/>
<dbReference type="PATRIC" id="fig|386585.9.peg.2847"/>
<dbReference type="eggNOG" id="ENOG5031KP0">
    <property type="taxonomic scope" value="Bacteria"/>
</dbReference>
<dbReference type="HOGENOM" id="CLU_936086_0_0_6"/>
<dbReference type="Proteomes" id="UP000000558">
    <property type="component" value="Chromosome"/>
</dbReference>
<dbReference type="GO" id="GO:0005576">
    <property type="term" value="C:extracellular region"/>
    <property type="evidence" value="ECO:0007669"/>
    <property type="project" value="UniProtKB-SubCell"/>
</dbReference>
<dbReference type="GO" id="GO:0030430">
    <property type="term" value="C:host cell cytoplasm"/>
    <property type="evidence" value="ECO:0000250"/>
    <property type="project" value="UniProtKB"/>
</dbReference>
<dbReference type="FunFam" id="6.10.250.3330:FF:000001">
    <property type="entry name" value="Secreted effector protein EspF(U)"/>
    <property type="match status" value="4"/>
</dbReference>
<dbReference type="Gene3D" id="6.10.250.3330">
    <property type="entry name" value="TccP2/EspF(U)-like"/>
    <property type="match status" value="6"/>
</dbReference>
<dbReference type="InterPro" id="IPR006891">
    <property type="entry name" value="T3SS_EspF"/>
</dbReference>
<dbReference type="InterPro" id="IPR044889">
    <property type="entry name" value="TccP2/EspF(U)-like_sf"/>
</dbReference>
<dbReference type="Pfam" id="PF04806">
    <property type="entry name" value="EspF"/>
    <property type="match status" value="6"/>
</dbReference>
<proteinExistence type="evidence at protein level"/>
<sequence>MINNVSSLFPTVNRNITAVYKKSSFSVSPQKITLNPVKISSPFSPSSSSISATTLFRAPNAHSASFHRQSTAESSLHQQLPNVRQRLIQHLAEHGIKPARSMAEHIPPAPNWPAPPPPVQNEQSRPLPDVAQRLVQHLAEHGIQPARNMAEHIPPAPNWPAPPLPVQNEQSRPLPDVAQRLVQHLAEHGIQPARSMAEHIPPAPNWPAPPPPVQNEQSRPLPDVAQRLMQHLAEHGIQPARNMAEHIPPAPNWPAPTPPVQNEQSRPLPDVAQRLMQHLAEHGIQPARNMAEHIPPAPNWPAPTPPVQNEQSRPLPDVAQRLMQHLAEHGINTSKRS</sequence>
<organism>
    <name type="scientific">Escherichia coli O157:H7</name>
    <dbReference type="NCBI Taxonomy" id="83334"/>
    <lineage>
        <taxon>Bacteria</taxon>
        <taxon>Pseudomonadati</taxon>
        <taxon>Pseudomonadota</taxon>
        <taxon>Gammaproteobacteria</taxon>
        <taxon>Enterobacterales</taxon>
        <taxon>Enterobacteriaceae</taxon>
        <taxon>Escherichia</taxon>
    </lineage>
</organism>
<name>ESFU2_ECO57</name>
<reference key="1">
    <citation type="journal article" date="2001" name="DNA Res.">
        <title>Complete genome sequence of enterohemorrhagic Escherichia coli O157:H7 and genomic comparison with a laboratory strain K-12.</title>
        <authorList>
            <person name="Hayashi T."/>
            <person name="Makino K."/>
            <person name="Ohnishi M."/>
            <person name="Kurokawa K."/>
            <person name="Ishii K."/>
            <person name="Yokoyama K."/>
            <person name="Han C.-G."/>
            <person name="Ohtsubo E."/>
            <person name="Nakayama K."/>
            <person name="Murata T."/>
            <person name="Tanaka M."/>
            <person name="Tobe T."/>
            <person name="Iida T."/>
            <person name="Takami H."/>
            <person name="Honda T."/>
            <person name="Sasakawa C."/>
            <person name="Ogasawara N."/>
            <person name="Yasunaga T."/>
            <person name="Kuhara S."/>
            <person name="Shiba T."/>
            <person name="Hattori M."/>
            <person name="Shinagawa H."/>
        </authorList>
    </citation>
    <scope>NUCLEOTIDE SEQUENCE [LARGE SCALE GENOMIC DNA]</scope>
    <source>
        <strain>O157:H7 / Sakai / RIMD 0509952 / EHEC</strain>
    </source>
</reference>
<accession>P0DJ88</accession>
<accession>Q8X2D5</accession>